<gene>
    <name type="primary">CTSD</name>
    <name type="ORF">TRV_03534</name>
</gene>
<sequence>MQFLWLCLLSAVTLQFTGTLAFYPIKLPDFTKGLVSNHGSIDRRFFTFPGLYKHAHTGSTTLNIRRGPSNYRRDNNYPAQIASPPTAPNTLGINNDGYDFSYFSEVKVGSEGQKMWMLIDTGASGTWVFGSDCTSKACGRHNTFGKEDSKTIKVTDEKWGVTYGTGKVSGVIVNDTMSFAGFELVTPFGSASTASDDFLNYPMDGILGIGPQDPNAKTPTVVQLLMQQKLLKSNVIGINLQRASEGATDGQITFGDIDKSKFSGELIYSNVVPDGYQWEIAMDDLIMDGKSLNLKGRTGIIDTGTSFLILPPADADLIHSMIPQANKGSGFYTLPCSTKVDIKLSIGGVEYTIQPDDYVGNETATKGTCNSLIVGRQILGPKQWLVGDVFLKNVYSVFDFDKNRVGLAARKYAGTKNPPSSTPSPGMFLLHAILCPKTISVLMLHIDPTSNKAPSGGSPGLPAESGSDSTTNGEATNGATSSPNSSSSVLTPTWLTLAVFFAIGSSLWS</sequence>
<reference key="1">
    <citation type="journal article" date="2011" name="Genome Biol.">
        <title>Comparative and functional genomics provide insights into the pathogenicity of dermatophytic fungi.</title>
        <authorList>
            <person name="Burmester A."/>
            <person name="Shelest E."/>
            <person name="Gloeckner G."/>
            <person name="Heddergott C."/>
            <person name="Schindler S."/>
            <person name="Staib P."/>
            <person name="Heidel A."/>
            <person name="Felder M."/>
            <person name="Petzold A."/>
            <person name="Szafranski K."/>
            <person name="Feuermann M."/>
            <person name="Pedruzzi I."/>
            <person name="Priebe S."/>
            <person name="Groth M."/>
            <person name="Winkler R."/>
            <person name="Li W."/>
            <person name="Kniemeyer O."/>
            <person name="Schroeckh V."/>
            <person name="Hertweck C."/>
            <person name="Hube B."/>
            <person name="White T.C."/>
            <person name="Platzer M."/>
            <person name="Guthke R."/>
            <person name="Heitman J."/>
            <person name="Woestemeyer J."/>
            <person name="Zipfel P.F."/>
            <person name="Monod M."/>
            <person name="Brakhage A.A."/>
        </authorList>
    </citation>
    <scope>NUCLEOTIDE SEQUENCE [LARGE SCALE GENOMIC DNA]</scope>
    <source>
        <strain>HKI 0517</strain>
    </source>
</reference>
<name>CTSD_TRIVH</name>
<accession>D4D8U6</accession>
<evidence type="ECO:0000250" key="1"/>
<evidence type="ECO:0000255" key="2"/>
<evidence type="ECO:0000255" key="3">
    <source>
        <dbReference type="PROSITE-ProRule" id="PRU01103"/>
    </source>
</evidence>
<evidence type="ECO:0000255" key="4">
    <source>
        <dbReference type="PROSITE-ProRule" id="PRU10094"/>
    </source>
</evidence>
<evidence type="ECO:0000256" key="5">
    <source>
        <dbReference type="SAM" id="MobiDB-lite"/>
    </source>
</evidence>
<evidence type="ECO:0000305" key="6"/>
<keyword id="KW-0064">Aspartyl protease</keyword>
<keyword id="KW-1003">Cell membrane</keyword>
<keyword id="KW-0325">Glycoprotein</keyword>
<keyword id="KW-0336">GPI-anchor</keyword>
<keyword id="KW-0378">Hydrolase</keyword>
<keyword id="KW-0449">Lipoprotein</keyword>
<keyword id="KW-0472">Membrane</keyword>
<keyword id="KW-0645">Protease</keyword>
<keyword id="KW-0732">Signal</keyword>
<keyword id="KW-0843">Virulence</keyword>
<dbReference type="EC" id="3.4.23.-"/>
<dbReference type="EMBL" id="ACYE01000183">
    <property type="protein sequence ID" value="EFE41705.1"/>
    <property type="molecule type" value="Genomic_DNA"/>
</dbReference>
<dbReference type="RefSeq" id="XP_003022323.1">
    <property type="nucleotide sequence ID" value="XM_003022277.1"/>
</dbReference>
<dbReference type="SMR" id="D4D8U6"/>
<dbReference type="MEROPS" id="A01.077"/>
<dbReference type="GlyCosmos" id="D4D8U6">
    <property type="glycosylation" value="3 sites, No reported glycans"/>
</dbReference>
<dbReference type="GeneID" id="9580870"/>
<dbReference type="KEGG" id="tve:TRV_03534"/>
<dbReference type="HOGENOM" id="CLU_013253_10_1_1"/>
<dbReference type="OrthoDB" id="3749at34384"/>
<dbReference type="Proteomes" id="UP000008383">
    <property type="component" value="Unassembled WGS sequence"/>
</dbReference>
<dbReference type="GO" id="GO:0005886">
    <property type="term" value="C:plasma membrane"/>
    <property type="evidence" value="ECO:0007669"/>
    <property type="project" value="UniProtKB-SubCell"/>
</dbReference>
<dbReference type="GO" id="GO:0098552">
    <property type="term" value="C:side of membrane"/>
    <property type="evidence" value="ECO:0007669"/>
    <property type="project" value="UniProtKB-KW"/>
</dbReference>
<dbReference type="GO" id="GO:0004190">
    <property type="term" value="F:aspartic-type endopeptidase activity"/>
    <property type="evidence" value="ECO:0007669"/>
    <property type="project" value="UniProtKB-KW"/>
</dbReference>
<dbReference type="GO" id="GO:0006508">
    <property type="term" value="P:proteolysis"/>
    <property type="evidence" value="ECO:0007669"/>
    <property type="project" value="UniProtKB-KW"/>
</dbReference>
<dbReference type="CDD" id="cd05471">
    <property type="entry name" value="pepsin_like"/>
    <property type="match status" value="1"/>
</dbReference>
<dbReference type="FunFam" id="2.40.70.10:FF:000085">
    <property type="entry name" value="Aspartic-type endopeptidase (CtsD), putative"/>
    <property type="match status" value="1"/>
</dbReference>
<dbReference type="FunFam" id="2.40.70.10:FF:000060">
    <property type="entry name" value="Aspartic-type endopeptidase ctsD"/>
    <property type="match status" value="1"/>
</dbReference>
<dbReference type="Gene3D" id="2.40.70.10">
    <property type="entry name" value="Acid Proteases"/>
    <property type="match status" value="2"/>
</dbReference>
<dbReference type="InterPro" id="IPR001461">
    <property type="entry name" value="Aspartic_peptidase_A1"/>
</dbReference>
<dbReference type="InterPro" id="IPR001969">
    <property type="entry name" value="Aspartic_peptidase_AS"/>
</dbReference>
<dbReference type="InterPro" id="IPR034164">
    <property type="entry name" value="Pepsin-like_dom"/>
</dbReference>
<dbReference type="InterPro" id="IPR033121">
    <property type="entry name" value="PEPTIDASE_A1"/>
</dbReference>
<dbReference type="InterPro" id="IPR021109">
    <property type="entry name" value="Peptidase_aspartic_dom_sf"/>
</dbReference>
<dbReference type="PANTHER" id="PTHR47966">
    <property type="entry name" value="BETA-SITE APP-CLEAVING ENZYME, ISOFORM A-RELATED"/>
    <property type="match status" value="1"/>
</dbReference>
<dbReference type="PANTHER" id="PTHR47966:SF75">
    <property type="entry name" value="ENDOPEPTIDASE (CTSD), PUTATIVE (AFU_ORTHOLOGUE AFUA_4G07040)-RELATED"/>
    <property type="match status" value="1"/>
</dbReference>
<dbReference type="Pfam" id="PF00026">
    <property type="entry name" value="Asp"/>
    <property type="match status" value="1"/>
</dbReference>
<dbReference type="PRINTS" id="PR00792">
    <property type="entry name" value="PEPSIN"/>
</dbReference>
<dbReference type="SUPFAM" id="SSF50630">
    <property type="entry name" value="Acid proteases"/>
    <property type="match status" value="1"/>
</dbReference>
<dbReference type="PROSITE" id="PS00141">
    <property type="entry name" value="ASP_PROTEASE"/>
    <property type="match status" value="1"/>
</dbReference>
<dbReference type="PROSITE" id="PS51767">
    <property type="entry name" value="PEPTIDASE_A1"/>
    <property type="match status" value="1"/>
</dbReference>
<proteinExistence type="inferred from homology"/>
<organism>
    <name type="scientific">Trichophyton verrucosum (strain HKI 0517)</name>
    <dbReference type="NCBI Taxonomy" id="663202"/>
    <lineage>
        <taxon>Eukaryota</taxon>
        <taxon>Fungi</taxon>
        <taxon>Dikarya</taxon>
        <taxon>Ascomycota</taxon>
        <taxon>Pezizomycotina</taxon>
        <taxon>Eurotiomycetes</taxon>
        <taxon>Eurotiomycetidae</taxon>
        <taxon>Onygenales</taxon>
        <taxon>Arthrodermataceae</taxon>
        <taxon>Trichophyton</taxon>
    </lineage>
</organism>
<feature type="signal peptide" evidence="2">
    <location>
        <begin position="1"/>
        <end position="21"/>
    </location>
</feature>
<feature type="chain" id="PRO_0000397700" description="Probable aspartic-type endopeptidase CTSD">
    <location>
        <begin position="22"/>
        <end position="485"/>
    </location>
</feature>
<feature type="propeptide" id="PRO_0000397701" description="Removed in mature form" evidence="2">
    <location>
        <begin position="486"/>
        <end position="509"/>
    </location>
</feature>
<feature type="domain" description="Peptidase A1" evidence="3">
    <location>
        <begin position="102"/>
        <end position="408"/>
    </location>
</feature>
<feature type="region of interest" description="Disordered" evidence="5">
    <location>
        <begin position="451"/>
        <end position="489"/>
    </location>
</feature>
<feature type="compositionally biased region" description="Polar residues" evidence="5">
    <location>
        <begin position="466"/>
        <end position="480"/>
    </location>
</feature>
<feature type="active site" evidence="4">
    <location>
        <position position="120"/>
    </location>
</feature>
<feature type="active site" evidence="4">
    <location>
        <position position="302"/>
    </location>
</feature>
<feature type="lipid moiety-binding region" description="GPI-anchor amidated serine" evidence="2">
    <location>
        <position position="485"/>
    </location>
</feature>
<feature type="glycosylation site" description="N-linked (GlcNAc...) asparagine" evidence="2">
    <location>
        <position position="174"/>
    </location>
</feature>
<feature type="glycosylation site" description="N-linked (GlcNAc...) asparagine" evidence="2">
    <location>
        <position position="361"/>
    </location>
</feature>
<feature type="glycosylation site" description="N-linked (GlcNAc...) asparagine" evidence="2">
    <location>
        <position position="484"/>
    </location>
</feature>
<protein>
    <recommendedName>
        <fullName>Probable aspartic-type endopeptidase CTSD</fullName>
        <ecNumber>3.4.23.-</ecNumber>
    </recommendedName>
</protein>
<comment type="function">
    <text evidence="1">Probable GPI-anchored aspartic-type endopeptidase which contributes to virulence.</text>
</comment>
<comment type="subcellular location">
    <subcellularLocation>
        <location evidence="6">Cell membrane</location>
        <topology evidence="6">Lipid-anchor</topology>
        <topology evidence="6">GPI-anchor</topology>
    </subcellularLocation>
</comment>
<comment type="similarity">
    <text evidence="6">Belongs to the peptidase A1 family.</text>
</comment>